<comment type="function">
    <text evidence="2 3">Dolichyl pyrophosphate Glc1Man9GlcNAc2 alpha-1,3-glucosyltransferase that operates in the biosynthetic pathway of dolichol-linked oligosaccharides, the glycan precursors employed in protein asparagine (N)-glycosylation. The assembly of dolichol-linked oligosaccharides begins on the cytosolic side of the endoplasmic reticulum membrane and finishes in its lumen. The sequential addition of sugars to dolichol pyrophosphate produces dolichol-linked oligosaccharides containing fourteen sugars, including two GlcNAcs, nine mannoses and three glucoses. Once assembled, the oligosaccharide is transferred from the lipid to nascent proteins by oligosaccharyltransferases. In the lumen of the endoplasmic reticulum, adds the second glucose residue from dolichyl phosphate glucose (Dol-P-Glc) onto the lipid-linked oligosaccharide intermediate Glc(1)Man(9)GlcNAc(2)-PP-Dol to produce Glc(2)Man(9)GlcNAc(2)-PP-Dol. Glc(2)Man(9)GlcNAc(2)-PP-Dol is a substrate for ALG10, the following enzyme in the biosynthetic pathway (By similarity). Required for PKD1/Polycystin-1 maturation and localization to the plasma membrane of the primary cilia (By similarity).</text>
</comment>
<comment type="catalytic activity">
    <reaction evidence="3">
        <text>an alpha-D-Glc-(1-&gt;3)-alpha-D-Man-(1-&gt;2)-alpha-D-Man-(1-&gt;2)-alpha-D-Man-(1-&gt;3)-[alpha-D-Man-(1-&gt;2)-alpha-D-Man-(1-&gt;3)-[alpha-D-Man-(1-&gt;2)-alpha-D-Man-(1-&gt;6)]-alpha-D-Man-(1-&gt;6)]-beta-D-Man-(1-&gt;4)-beta-D-GlcNAc-(1-&gt;4)-alpha-D-GlcNAc-diphospho-di-trans,poly-cis-dolichol + a di-trans,poly-cis-dolichyl beta-D-glucosyl phosphate = an alpha-D-Glc-(1-&gt;3)-alpha-D-Glc-(1-&gt;3)-alpha-D-Man-(1-&gt;2)-alpha-D-Man-(1-&gt;2)-alpha-D-Man-(1-&gt;3)-[alpha-D-Man-(1-&gt;2)-alpha-D-Man-(1-&gt;3)-[alpha-D-Man-(1-&gt;2)-alpha-D-Man-(1-&gt;6)]-alpha-D-Man-(1-&gt;6)]-beta-D-Man-(1-&gt;4)-beta-D-GlcNAc-(1-&gt;4)-alpha-D-GlcNAc-diphospho-di-trans,poly-cis-dolichol + a di-trans,poly-cis-dolichyl phosphate + H(+)</text>
        <dbReference type="Rhea" id="RHEA:31307"/>
        <dbReference type="Rhea" id="RHEA-COMP:19498"/>
        <dbReference type="Rhea" id="RHEA-COMP:19502"/>
        <dbReference type="Rhea" id="RHEA-COMP:19521"/>
        <dbReference type="Rhea" id="RHEA-COMP:19522"/>
        <dbReference type="ChEBI" id="CHEBI:15378"/>
        <dbReference type="ChEBI" id="CHEBI:57525"/>
        <dbReference type="ChEBI" id="CHEBI:57683"/>
        <dbReference type="ChEBI" id="CHEBI:132521"/>
        <dbReference type="ChEBI" id="CHEBI:132522"/>
        <dbReference type="EC" id="2.4.1.265"/>
    </reaction>
    <physiologicalReaction direction="left-to-right" evidence="3">
        <dbReference type="Rhea" id="RHEA:31308"/>
    </physiologicalReaction>
</comment>
<comment type="pathway">
    <text evidence="3">Protein modification; protein glycosylation.</text>
</comment>
<comment type="subcellular location">
    <subcellularLocation>
        <location evidence="3">Endoplasmic reticulum membrane</location>
        <topology evidence="4">Multi-pass membrane protein</topology>
    </subcellularLocation>
</comment>
<comment type="similarity">
    <text evidence="5">Belongs to the ALG6/ALG8 glucosyltransferase family.</text>
</comment>
<accession>Q0P5D9</accession>
<reference key="1">
    <citation type="submission" date="2006-08" db="EMBL/GenBank/DDBJ databases">
        <authorList>
            <consortium name="NIH - Mammalian Gene Collection (MGC) project"/>
        </authorList>
    </citation>
    <scope>NUCLEOTIDE SEQUENCE [LARGE SCALE MRNA]</scope>
    <source>
        <strain>Hereford</strain>
        <tissue>Fetal liver</tissue>
    </source>
</reference>
<sequence length="526" mass="59964">MAAFGIATGGSNWFSALALGVTLLKCLLIPTYHSTDFEVHRNWLAITHSLPISQWYYEATSEWTLDYPPFFAWFEYALSHVAKYFDQEMLNVRNLNYSSSRTLLFQRFSVIFTDALFVYAVHECCKCIDGKKAGKELTEKPKFILSALLLWNFGLLIVDHIHFQYNGFLSGLMLLSIARFFQKRHMEGAFLFAVLLHFKHIYLYVAPAYGVYLLRSYCFTANKQDGSIRWNSFSFVRLISLGLIVFLVSALSLGPFLALNQLPQVFSRLFPFKRGLCHAYWAPNFWALYSAFDKVLSVIGLELKLLDPNKIPKASMTSGLVQQFQHTVLPSVTPLATFICTLIAMLPSVFCLWCKPQGPRGFLRCLILCALSSFMFGWHVHEKAILLAVLPMSLLSVGKAVDASIFLILTTTGHYSPFPLLFTAPELPIKIILMLLFTIYSISSLKTLFRKEKPLFNWMETFYLLGLGPLEVFCEFVFPFTSWNLKYPFIPLLLTSVYCAVGITYAWLKLYVSVLIDPPVGKTKKQ</sequence>
<dbReference type="EC" id="2.4.1.265" evidence="3"/>
<dbReference type="EMBL" id="BC120179">
    <property type="protein sequence ID" value="AAI20180.1"/>
    <property type="molecule type" value="mRNA"/>
</dbReference>
<dbReference type="RefSeq" id="NP_001069593.1">
    <property type="nucleotide sequence ID" value="NM_001076125.2"/>
</dbReference>
<dbReference type="SMR" id="Q0P5D9"/>
<dbReference type="FunCoup" id="Q0P5D9">
    <property type="interactions" value="4157"/>
</dbReference>
<dbReference type="STRING" id="9913.ENSBTAP00000049035"/>
<dbReference type="CAZy" id="GT57">
    <property type="family name" value="Glycosyltransferase Family 57"/>
</dbReference>
<dbReference type="PaxDb" id="9913-ENSBTAP00000049035"/>
<dbReference type="GeneID" id="538731"/>
<dbReference type="KEGG" id="bta:538731"/>
<dbReference type="CTD" id="79053"/>
<dbReference type="eggNOG" id="KOG2576">
    <property type="taxonomic scope" value="Eukaryota"/>
</dbReference>
<dbReference type="InParanoid" id="Q0P5D9"/>
<dbReference type="OrthoDB" id="1689333at2759"/>
<dbReference type="UniPathway" id="UPA00378"/>
<dbReference type="Proteomes" id="UP000009136">
    <property type="component" value="Unplaced"/>
</dbReference>
<dbReference type="GO" id="GO:0005789">
    <property type="term" value="C:endoplasmic reticulum membrane"/>
    <property type="evidence" value="ECO:0000250"/>
    <property type="project" value="UniProtKB"/>
</dbReference>
<dbReference type="GO" id="GO:0042283">
    <property type="term" value="F:dolichyl pyrophosphate Glc1Man9GlcNAc2 alpha-1,3-glucosyltransferase activity"/>
    <property type="evidence" value="ECO:0000250"/>
    <property type="project" value="UniProtKB"/>
</dbReference>
<dbReference type="GO" id="GO:0006488">
    <property type="term" value="P:dolichol-linked oligosaccharide biosynthetic process"/>
    <property type="evidence" value="ECO:0000250"/>
    <property type="project" value="UniProtKB"/>
</dbReference>
<dbReference type="GO" id="GO:0006487">
    <property type="term" value="P:protein N-linked glycosylation"/>
    <property type="evidence" value="ECO:0000250"/>
    <property type="project" value="UniProtKB"/>
</dbReference>
<dbReference type="GO" id="GO:0018279">
    <property type="term" value="P:protein N-linked glycosylation via asparagine"/>
    <property type="evidence" value="ECO:0000250"/>
    <property type="project" value="UniProtKB"/>
</dbReference>
<dbReference type="InterPro" id="IPR004856">
    <property type="entry name" value="Glyco_trans_ALG6/ALG8"/>
</dbReference>
<dbReference type="PANTHER" id="PTHR12413">
    <property type="entry name" value="DOLICHYL GLYCOSYLTRANSFERASE"/>
    <property type="match status" value="1"/>
</dbReference>
<dbReference type="PANTHER" id="PTHR12413:SF2">
    <property type="entry name" value="DOLICHYL PYROPHOSPHATE GLC1MAN9GLCNAC2 ALPHA-1,3-GLUCOSYLTRANSFERASE-RELATED"/>
    <property type="match status" value="1"/>
</dbReference>
<dbReference type="Pfam" id="PF03155">
    <property type="entry name" value="Alg6_Alg8"/>
    <property type="match status" value="1"/>
</dbReference>
<feature type="chain" id="PRO_0000281997" description="Dolichyl pyrophosphate Glc1Man9GlcNAc2 alpha-1,3-glucosyltransferase">
    <location>
        <begin position="1"/>
        <end position="526"/>
    </location>
</feature>
<feature type="transmembrane region" description="Helical" evidence="4">
    <location>
        <begin position="4"/>
        <end position="24"/>
    </location>
</feature>
<feature type="transmembrane region" description="Helical" evidence="4">
    <location>
        <begin position="103"/>
        <end position="122"/>
    </location>
</feature>
<feature type="transmembrane region" description="Helical" evidence="4">
    <location>
        <begin position="143"/>
        <end position="163"/>
    </location>
</feature>
<feature type="transmembrane region" description="Helical" evidence="4">
    <location>
        <begin position="188"/>
        <end position="208"/>
    </location>
</feature>
<feature type="transmembrane region" description="Helical" evidence="4">
    <location>
        <begin position="238"/>
        <end position="258"/>
    </location>
</feature>
<feature type="transmembrane region" description="Helical" evidence="4">
    <location>
        <begin position="334"/>
        <end position="354"/>
    </location>
</feature>
<feature type="transmembrane region" description="Helical" evidence="4">
    <location>
        <begin position="368"/>
        <end position="388"/>
    </location>
</feature>
<feature type="transmembrane region" description="Helical" evidence="4">
    <location>
        <begin position="389"/>
        <end position="409"/>
    </location>
</feature>
<feature type="transmembrane region" description="Helical" evidence="4">
    <location>
        <begin position="427"/>
        <end position="449"/>
    </location>
</feature>
<feature type="transmembrane region" description="Helical" evidence="4">
    <location>
        <begin position="461"/>
        <end position="481"/>
    </location>
</feature>
<feature type="transmembrane region" description="Helical" evidence="4">
    <location>
        <begin position="488"/>
        <end position="508"/>
    </location>
</feature>
<name>ALG8_BOVIN</name>
<keyword id="KW-0256">Endoplasmic reticulum</keyword>
<keyword id="KW-0328">Glycosyltransferase</keyword>
<keyword id="KW-0472">Membrane</keyword>
<keyword id="KW-1185">Reference proteome</keyword>
<keyword id="KW-0808">Transferase</keyword>
<keyword id="KW-0812">Transmembrane</keyword>
<keyword id="KW-1133">Transmembrane helix</keyword>
<protein>
    <recommendedName>
        <fullName evidence="3">Dolichyl pyrophosphate Glc1Man9GlcNAc2 alpha-1,3-glucosyltransferase</fullName>
        <ecNumber evidence="3">2.4.1.265</ecNumber>
    </recommendedName>
    <alternativeName>
        <fullName evidence="1">Asparagine-linked glycosylation protein 8 homolog</fullName>
    </alternativeName>
    <alternativeName>
        <fullName evidence="1">Dol-P-Glc:Glc(1)Man(9)GlcNAc(2)-PP-dolichyl alpha-1,3-glucosyltransferase</fullName>
    </alternativeName>
    <alternativeName>
        <fullName evidence="1">Dolichyl-P-Glc:Glc1Man9GlcNAc2-PP-dolichyl glucosyltransferase</fullName>
    </alternativeName>
</protein>
<organism>
    <name type="scientific">Bos taurus</name>
    <name type="common">Bovine</name>
    <dbReference type="NCBI Taxonomy" id="9913"/>
    <lineage>
        <taxon>Eukaryota</taxon>
        <taxon>Metazoa</taxon>
        <taxon>Chordata</taxon>
        <taxon>Craniata</taxon>
        <taxon>Vertebrata</taxon>
        <taxon>Euteleostomi</taxon>
        <taxon>Mammalia</taxon>
        <taxon>Eutheria</taxon>
        <taxon>Laurasiatheria</taxon>
        <taxon>Artiodactyla</taxon>
        <taxon>Ruminantia</taxon>
        <taxon>Pecora</taxon>
        <taxon>Bovidae</taxon>
        <taxon>Bovinae</taxon>
        <taxon>Bos</taxon>
    </lineage>
</organism>
<proteinExistence type="evidence at transcript level"/>
<gene>
    <name evidence="3" type="primary">ALG8</name>
</gene>
<evidence type="ECO:0000250" key="1">
    <source>
        <dbReference type="UniProtKB" id="P40351"/>
    </source>
</evidence>
<evidence type="ECO:0000250" key="2">
    <source>
        <dbReference type="UniProtKB" id="Q6P8H8"/>
    </source>
</evidence>
<evidence type="ECO:0000250" key="3">
    <source>
        <dbReference type="UniProtKB" id="Q9BVK2"/>
    </source>
</evidence>
<evidence type="ECO:0000255" key="4"/>
<evidence type="ECO:0000305" key="5"/>